<protein>
    <recommendedName>
        <fullName>Protein UL24 homolog</fullName>
    </recommendedName>
</protein>
<accession>Q06092</accession>
<comment type="function">
    <text evidence="1">May participate in nuclear egress of viral particles. Plays a role in the dispersal of several host nucleolar proteins including NCL/nucleolin and NPM1. Since deletion of host NCL/nucleolin negatively impact on nuclear egress, UL24 supposedly acts on this process through its effect on host nucleoli (By similarity).</text>
</comment>
<comment type="subcellular location">
    <subcellularLocation>
        <location evidence="1">Virion</location>
    </subcellularLocation>
    <subcellularLocation>
        <location evidence="1">Host cytoplasm</location>
    </subcellularLocation>
    <subcellularLocation>
        <location evidence="1">Host nucleus</location>
        <location evidence="1">Host nucleolus</location>
    </subcellularLocation>
    <subcellularLocation>
        <location evidence="1">Host Golgi apparatus</location>
    </subcellularLocation>
</comment>
<comment type="induction">
    <text>Expressed late in the infection cycle.</text>
</comment>
<comment type="similarity">
    <text evidence="3">Belongs to the herpesviridae UL24 family.</text>
</comment>
<organismHost>
    <name type="scientific">Homo sapiens</name>
    <name type="common">Human</name>
    <dbReference type="NCBI Taxonomy" id="9606"/>
</organismHost>
<gene>
    <name type="primary">U49</name>
    <name type="synonym">BHRF2</name>
</gene>
<name>UL24_HHV6U</name>
<organism>
    <name type="scientific">Human herpesvirus 6A (strain Uganda-1102)</name>
    <name type="common">HHV-6 variant A</name>
    <name type="synonym">Human B lymphotropic virus</name>
    <dbReference type="NCBI Taxonomy" id="10370"/>
    <lineage>
        <taxon>Viruses</taxon>
        <taxon>Duplodnaviria</taxon>
        <taxon>Heunggongvirae</taxon>
        <taxon>Peploviricota</taxon>
        <taxon>Herviviricetes</taxon>
        <taxon>Herpesvirales</taxon>
        <taxon>Orthoherpesviridae</taxon>
        <taxon>Betaherpesvirinae</taxon>
        <taxon>Roseolovirus</taxon>
        <taxon>Roseolovirus humanbeta6a</taxon>
        <taxon>Human betaherpesvirus 6A</taxon>
    </lineage>
</organism>
<feature type="chain" id="PRO_0000115985" description="Protein UL24 homolog">
    <location>
        <begin position="1"/>
        <end position="252"/>
    </location>
</feature>
<feature type="region of interest" description="Disordered" evidence="2">
    <location>
        <begin position="215"/>
        <end position="252"/>
    </location>
</feature>
<feature type="compositionally biased region" description="Basic residues" evidence="2">
    <location>
        <begin position="237"/>
        <end position="252"/>
    </location>
</feature>
<keyword id="KW-1035">Host cytoplasm</keyword>
<keyword id="KW-1040">Host Golgi apparatus</keyword>
<keyword id="KW-1048">Host nucleus</keyword>
<keyword id="KW-0426">Late protein</keyword>
<keyword id="KW-1185">Reference proteome</keyword>
<keyword id="KW-0946">Virion</keyword>
<proteinExistence type="evidence at transcript level"/>
<sequence>MSLTGLPDIRKKIGQFHHLRIYKQILSLQGNFARLNYFLGDVFPANLRSASVSVFFEVRLGPRIPDCIVLLKSVDAKDEFAFHCYFFEFKTTLGKSTMQSVHHNCIHQAQYLQGLRQLQQSISFLDQYLIADEVSWNVVPVICFFRQWGLKLDFFKKFSGKTKRLSFSFIRDLFARSQDGAVQSLLSIPNYTNFRRACQKHTDLYRKRCRKAPKSVLTKTSGENRSRASRQVAKNAPKNRIRRTAKKDAKRQ</sequence>
<reference key="1">
    <citation type="journal article" date="1992" name="DNA Seq.">
        <title>Infectivity determinants encoded in a conserved gene block of human herpesvirus-6.</title>
        <authorList>
            <person name="Gompels U.A."/>
            <person name="Carss A.L."/>
            <person name="Sun N."/>
            <person name="Arrand J.R."/>
        </authorList>
    </citation>
    <scope>NUCLEOTIDE SEQUENCE [GENOMIC DNA]</scope>
</reference>
<reference key="2">
    <citation type="journal article" date="1995" name="Virology">
        <title>The DNA sequence of human herpesvirus-6: structure, coding content, and genome evolution.</title>
        <authorList>
            <person name="Gompels U.A."/>
            <person name="Nicholas J."/>
            <person name="Lawrence G.L."/>
            <person name="Jones M."/>
            <person name="Thomson B.J."/>
            <person name="Martin M.E.D."/>
            <person name="Efstathiou S."/>
            <person name="Craxton M.A."/>
            <person name="Macaulay H.A."/>
        </authorList>
    </citation>
    <scope>NUCLEOTIDE SEQUENCE [LARGE SCALE GENOMIC DNA]</scope>
</reference>
<dbReference type="EMBL" id="X64320">
    <property type="protein sequence ID" value="CAA45604.1"/>
    <property type="molecule type" value="Genomic_DNA"/>
</dbReference>
<dbReference type="EMBL" id="X83413">
    <property type="protein sequence ID" value="CAA58383.1"/>
    <property type="molecule type" value="Genomic_DNA"/>
</dbReference>
<dbReference type="PIR" id="E56653">
    <property type="entry name" value="E56653"/>
</dbReference>
<dbReference type="RefSeq" id="NP_042942.1">
    <property type="nucleotide sequence ID" value="NC_001664.2"/>
</dbReference>
<dbReference type="DNASU" id="1487929"/>
<dbReference type="GeneID" id="1487929"/>
<dbReference type="KEGG" id="vg:1487929"/>
<dbReference type="Proteomes" id="UP000009295">
    <property type="component" value="Segment"/>
</dbReference>
<dbReference type="GO" id="GO:0044177">
    <property type="term" value="C:host cell Golgi apparatus"/>
    <property type="evidence" value="ECO:0007669"/>
    <property type="project" value="UniProtKB-SubCell"/>
</dbReference>
<dbReference type="GO" id="GO:0044196">
    <property type="term" value="C:host cell nucleolus"/>
    <property type="evidence" value="ECO:0007669"/>
    <property type="project" value="UniProtKB-SubCell"/>
</dbReference>
<dbReference type="GO" id="GO:0044423">
    <property type="term" value="C:virion component"/>
    <property type="evidence" value="ECO:0007669"/>
    <property type="project" value="UniProtKB-KW"/>
</dbReference>
<dbReference type="InterPro" id="IPR002580">
    <property type="entry name" value="Herpes_UL24"/>
</dbReference>
<dbReference type="Pfam" id="PF01646">
    <property type="entry name" value="Herpes_UL24"/>
    <property type="match status" value="1"/>
</dbReference>
<evidence type="ECO:0000250" key="1"/>
<evidence type="ECO:0000256" key="2">
    <source>
        <dbReference type="SAM" id="MobiDB-lite"/>
    </source>
</evidence>
<evidence type="ECO:0000305" key="3"/>